<organism>
    <name type="scientific">Saccharomyces cerevisiae (strain ATCC 204508 / S288c)</name>
    <name type="common">Baker's yeast</name>
    <dbReference type="NCBI Taxonomy" id="559292"/>
    <lineage>
        <taxon>Eukaryota</taxon>
        <taxon>Fungi</taxon>
        <taxon>Dikarya</taxon>
        <taxon>Ascomycota</taxon>
        <taxon>Saccharomycotina</taxon>
        <taxon>Saccharomycetes</taxon>
        <taxon>Saccharomycetales</taxon>
        <taxon>Saccharomycetaceae</taxon>
        <taxon>Saccharomyces</taxon>
    </lineage>
</organism>
<accession>P32471</accession>
<accession>D6VPL3</accession>
<keyword id="KW-0002">3D-structure</keyword>
<keyword id="KW-0007">Acetylation</keyword>
<keyword id="KW-0903">Direct protein sequencing</keyword>
<keyword id="KW-0251">Elongation factor</keyword>
<keyword id="KW-1017">Isopeptide bond</keyword>
<keyword id="KW-0597">Phosphoprotein</keyword>
<keyword id="KW-0648">Protein biosynthesis</keyword>
<keyword id="KW-1185">Reference proteome</keyword>
<keyword id="KW-0832">Ubl conjugation</keyword>
<evidence type="ECO:0000269" key="1">
    <source>
    </source>
</evidence>
<evidence type="ECO:0000269" key="2">
    <source>
    </source>
</evidence>
<evidence type="ECO:0000269" key="3">
    <source>
    </source>
</evidence>
<evidence type="ECO:0000269" key="4">
    <source>
    </source>
</evidence>
<evidence type="ECO:0000269" key="5">
    <source>
    </source>
</evidence>
<evidence type="ECO:0000305" key="6"/>
<evidence type="ECO:0007744" key="7">
    <source>
    </source>
</evidence>
<evidence type="ECO:0007744" key="8">
    <source>
    </source>
</evidence>
<evidence type="ECO:0007744" key="9">
    <source>
    </source>
</evidence>
<evidence type="ECO:0007744" key="10">
    <source>
    </source>
</evidence>
<evidence type="ECO:0007829" key="11">
    <source>
        <dbReference type="PDB" id="1F60"/>
    </source>
</evidence>
<sequence>MASTDFSKIETLKQLNASLADKSYIEGTAVSQADVTVFKAFQSAYPEFSRWFNHIASKADEFDSFPAASAAAAEEEEDDDVDLFGSDDEEADAEAEKLKAERIAAYNAKKAAKPAKPAAKSIVTLDVKPWDDETNLEEMVANVKAIEMEGLTWGAHQFIPIGFGIKKLQINCVVEDDKVSLDDLQQSIEEDEDHVQSTDIAAMQKL</sequence>
<name>EF1B_YEAST</name>
<comment type="function">
    <text evidence="1">Catalytic subunit of the guanine nucleotide exchange factor (GEF) (eEF1B subcomplex) of the eukaryotic elongation factor 1 complex (eEF1). Stimulates the exchange of GDP for GTP on elongation factor 1A (eEF1A), probably by displacing GDP from the nucleotide binding pocket in eEF1A. The 30-fold higher concentration of GTP compared to GDP in cells favors the formation of eEF1A-GTP, which rapidly forms a ternary complex with aminoacyl-tRNA that in turn displaces eEF1B from the complex.</text>
</comment>
<comment type="pathway">
    <text>Protein biosynthesis; polypeptide chain elongation.</text>
</comment>
<comment type="subunit">
    <text evidence="2 3">The eukaryotic elongation factor 1 complex (eEF1) is probably a heterohexamer. Two trimeric complexes, each composed of eEF1A (TEF1 or TEF2), eEF1Balpha (EFB1) and eEF1Bgamma (CAM1 or TEF4), are probably dimerized via the eF1Bgamma subunits. eEF1Balpha interacts directly with eEF1A. eEF1Balpha and eEF1Bgamma form the eEF1B subcomplex with the GEF activity.</text>
</comment>
<comment type="interaction">
    <interactant intactId="EBI-6319">
        <id>P32471</id>
    </interactant>
    <interactant intactId="EBI-6314">
        <id>P02994</id>
        <label>TEF2</label>
    </interactant>
    <organismsDiffer>false</organismsDiffer>
    <experiments>4</experiments>
</comment>
<comment type="domain">
    <text>The C-terminus (pos. 119-205) exhibits guanine nucleotide exchange activity.</text>
</comment>
<comment type="PTM">
    <text evidence="4">S-thiolated in response to oxidative stress, probably inhibiting the protein and causing a reduction in protein synthesis.</text>
</comment>
<comment type="similarity">
    <text evidence="6">Belongs to the EF-1-beta/EF-1-delta family.</text>
</comment>
<proteinExistence type="evidence at protein level"/>
<dbReference type="EMBL" id="D14080">
    <property type="protein sequence ID" value="BAA03165.1"/>
    <property type="molecule type" value="Genomic_DNA"/>
</dbReference>
<dbReference type="EMBL" id="L22015">
    <property type="protein sequence ID" value="AAC04954.1"/>
    <property type="molecule type" value="Genomic_DNA"/>
</dbReference>
<dbReference type="EMBL" id="BK006935">
    <property type="protein sequence ID" value="DAA06983.1"/>
    <property type="molecule type" value="Genomic_DNA"/>
</dbReference>
<dbReference type="PIR" id="S43445">
    <property type="entry name" value="S43445"/>
</dbReference>
<dbReference type="RefSeq" id="NP_009398.1">
    <property type="nucleotide sequence ID" value="NM_001178150.1"/>
</dbReference>
<dbReference type="PDB" id="1F60">
    <property type="method" value="X-ray"/>
    <property type="resolution" value="1.67 A"/>
    <property type="chains" value="B=113-206"/>
</dbReference>
<dbReference type="PDB" id="1G7C">
    <property type="method" value="X-ray"/>
    <property type="resolution" value="2.05 A"/>
    <property type="chains" value="B=113-206"/>
</dbReference>
<dbReference type="PDB" id="1IJE">
    <property type="method" value="X-ray"/>
    <property type="resolution" value="2.40 A"/>
    <property type="chains" value="B=117-206"/>
</dbReference>
<dbReference type="PDB" id="1IJF">
    <property type="method" value="X-ray"/>
    <property type="resolution" value="3.00 A"/>
    <property type="chains" value="B=117-206"/>
</dbReference>
<dbReference type="PDB" id="2B7B">
    <property type="method" value="X-ray"/>
    <property type="resolution" value="2.60 A"/>
    <property type="chains" value="B=113-204"/>
</dbReference>
<dbReference type="PDB" id="2B7C">
    <property type="method" value="X-ray"/>
    <property type="resolution" value="1.80 A"/>
    <property type="chains" value="B=113-204"/>
</dbReference>
<dbReference type="PDB" id="5O8W">
    <property type="method" value="X-ray"/>
    <property type="resolution" value="1.67 A"/>
    <property type="chains" value="B=113-206"/>
</dbReference>
<dbReference type="PDBsum" id="1F60"/>
<dbReference type="PDBsum" id="1G7C"/>
<dbReference type="PDBsum" id="1IJE"/>
<dbReference type="PDBsum" id="1IJF"/>
<dbReference type="PDBsum" id="2B7B"/>
<dbReference type="PDBsum" id="2B7C"/>
<dbReference type="PDBsum" id="5O8W"/>
<dbReference type="SMR" id="P32471"/>
<dbReference type="BioGRID" id="31787">
    <property type="interactions" value="113"/>
</dbReference>
<dbReference type="ComplexPortal" id="CPX-2854">
    <property type="entry name" value="Elongation Factor eEF1 complex, variant CAM1"/>
</dbReference>
<dbReference type="ComplexPortal" id="CPX-425">
    <property type="entry name" value="Elongation Factor eEF1 complex, variant TEF4"/>
</dbReference>
<dbReference type="DIP" id="DIP-6445N"/>
<dbReference type="FunCoup" id="P32471">
    <property type="interactions" value="991"/>
</dbReference>
<dbReference type="IntAct" id="P32471">
    <property type="interactions" value="24"/>
</dbReference>
<dbReference type="MINT" id="P32471"/>
<dbReference type="STRING" id="4932.YAL003W"/>
<dbReference type="iPTMnet" id="P32471"/>
<dbReference type="PaxDb" id="4932-YAL003W"/>
<dbReference type="PeptideAtlas" id="P32471"/>
<dbReference type="TopDownProteomics" id="P32471"/>
<dbReference type="EnsemblFungi" id="YAL003W_mRNA">
    <property type="protein sequence ID" value="YAL003W"/>
    <property type="gene ID" value="YAL003W"/>
</dbReference>
<dbReference type="GeneID" id="851260"/>
<dbReference type="KEGG" id="sce:YAL003W"/>
<dbReference type="AGR" id="SGD:S000000003"/>
<dbReference type="SGD" id="S000000003">
    <property type="gene designation" value="EFB1"/>
</dbReference>
<dbReference type="VEuPathDB" id="FungiDB:YAL003W"/>
<dbReference type="eggNOG" id="KOG1668">
    <property type="taxonomic scope" value="Eukaryota"/>
</dbReference>
<dbReference type="GeneTree" id="ENSGT00950000183014"/>
<dbReference type="HOGENOM" id="CLU_050172_0_2_1"/>
<dbReference type="InParanoid" id="P32471"/>
<dbReference type="OMA" id="YRWYKHI"/>
<dbReference type="OrthoDB" id="331763at2759"/>
<dbReference type="BioCyc" id="YEAST:G3O-28818-MONOMER"/>
<dbReference type="Reactome" id="R-SCE-156842">
    <property type="pathway name" value="Eukaryotic Translation Elongation"/>
</dbReference>
<dbReference type="UniPathway" id="UPA00345"/>
<dbReference type="BioGRID-ORCS" id="851260">
    <property type="hits" value="7 hits in 10 CRISPR screens"/>
</dbReference>
<dbReference type="CD-CODE" id="E03F929F">
    <property type="entry name" value="Stress granule"/>
</dbReference>
<dbReference type="EvolutionaryTrace" id="P32471"/>
<dbReference type="PRO" id="PR:P32471"/>
<dbReference type="Proteomes" id="UP000002311">
    <property type="component" value="Chromosome I"/>
</dbReference>
<dbReference type="RNAct" id="P32471">
    <property type="molecule type" value="protein"/>
</dbReference>
<dbReference type="GO" id="GO:0005829">
    <property type="term" value="C:cytosol"/>
    <property type="evidence" value="ECO:0000318"/>
    <property type="project" value="GO_Central"/>
</dbReference>
<dbReference type="GO" id="GO:0005853">
    <property type="term" value="C:eukaryotic translation elongation factor 1 complex"/>
    <property type="evidence" value="ECO:0000315"/>
    <property type="project" value="SGD"/>
</dbReference>
<dbReference type="GO" id="GO:0005840">
    <property type="term" value="C:ribosome"/>
    <property type="evidence" value="ECO:0000314"/>
    <property type="project" value="ComplexPortal"/>
</dbReference>
<dbReference type="GO" id="GO:0005085">
    <property type="term" value="F:guanyl-nucleotide exchange factor activity"/>
    <property type="evidence" value="ECO:0000314"/>
    <property type="project" value="SGD"/>
</dbReference>
<dbReference type="GO" id="GO:0003746">
    <property type="term" value="F:translation elongation factor activity"/>
    <property type="evidence" value="ECO:0007669"/>
    <property type="project" value="UniProtKB-KW"/>
</dbReference>
<dbReference type="GO" id="GO:1990145">
    <property type="term" value="P:maintenance of translational fidelity"/>
    <property type="evidence" value="ECO:0000315"/>
    <property type="project" value="SGD"/>
</dbReference>
<dbReference type="GO" id="GO:0032232">
    <property type="term" value="P:negative regulation of actin filament bundle assembly"/>
    <property type="evidence" value="ECO:0000314"/>
    <property type="project" value="SGD"/>
</dbReference>
<dbReference type="GO" id="GO:0006449">
    <property type="term" value="P:regulation of translational termination"/>
    <property type="evidence" value="ECO:0000316"/>
    <property type="project" value="SGD"/>
</dbReference>
<dbReference type="GO" id="GO:0006414">
    <property type="term" value="P:translational elongation"/>
    <property type="evidence" value="ECO:0000314"/>
    <property type="project" value="ComplexPortal"/>
</dbReference>
<dbReference type="CDD" id="cd00292">
    <property type="entry name" value="EF1B"/>
    <property type="match status" value="1"/>
</dbReference>
<dbReference type="FunFam" id="1.20.1050.130:FF:000009">
    <property type="entry name" value="Elongation factor 1-beta"/>
    <property type="match status" value="1"/>
</dbReference>
<dbReference type="FunFam" id="3.30.70.60:FF:000001">
    <property type="entry name" value="Elongation factor 1-beta 1 like"/>
    <property type="match status" value="1"/>
</dbReference>
<dbReference type="Gene3D" id="1.20.1050.130">
    <property type="match status" value="1"/>
</dbReference>
<dbReference type="Gene3D" id="3.30.70.60">
    <property type="match status" value="1"/>
</dbReference>
<dbReference type="InterPro" id="IPR053836">
    <property type="entry name" value="Arc1-like_N"/>
</dbReference>
<dbReference type="InterPro" id="IPR036219">
    <property type="entry name" value="eEF-1beta-like_sf"/>
</dbReference>
<dbReference type="InterPro" id="IPR018940">
    <property type="entry name" value="EF-1_beta_acid_region_euk"/>
</dbReference>
<dbReference type="InterPro" id="IPR049720">
    <property type="entry name" value="EF1B_bsu/dsu"/>
</dbReference>
<dbReference type="InterPro" id="IPR014038">
    <property type="entry name" value="EF1B_bsu/dsu_GNE"/>
</dbReference>
<dbReference type="InterPro" id="IPR036282">
    <property type="entry name" value="Glutathione-S-Trfase_C_sf"/>
</dbReference>
<dbReference type="InterPro" id="IPR014717">
    <property type="entry name" value="Transl_elong_EF1B/ribsomal_bS6"/>
</dbReference>
<dbReference type="InterPro" id="IPR001326">
    <property type="entry name" value="Transl_elong_EF1B_B/D_CS"/>
</dbReference>
<dbReference type="PANTHER" id="PTHR11595">
    <property type="entry name" value="EF-HAND AND COILED-COIL DOMAIN-CONTAINING FAMILY MEMBER"/>
    <property type="match status" value="1"/>
</dbReference>
<dbReference type="PANTHER" id="PTHR11595:SF21">
    <property type="entry name" value="ELONGATION FACTOR 1-BETA"/>
    <property type="match status" value="1"/>
</dbReference>
<dbReference type="Pfam" id="PF21972">
    <property type="entry name" value="Arc1p_N_like"/>
    <property type="match status" value="1"/>
</dbReference>
<dbReference type="Pfam" id="PF10587">
    <property type="entry name" value="EF-1_beta_acid"/>
    <property type="match status" value="1"/>
</dbReference>
<dbReference type="Pfam" id="PF00736">
    <property type="entry name" value="EF1_GNE"/>
    <property type="match status" value="1"/>
</dbReference>
<dbReference type="SMART" id="SM01182">
    <property type="entry name" value="EF-1_beta_acid"/>
    <property type="match status" value="1"/>
</dbReference>
<dbReference type="SMART" id="SM00888">
    <property type="entry name" value="EF1_GNE"/>
    <property type="match status" value="1"/>
</dbReference>
<dbReference type="SUPFAM" id="SSF54984">
    <property type="entry name" value="eEF-1beta-like"/>
    <property type="match status" value="1"/>
</dbReference>
<dbReference type="SUPFAM" id="SSF47616">
    <property type="entry name" value="GST C-terminal domain-like"/>
    <property type="match status" value="1"/>
</dbReference>
<dbReference type="PROSITE" id="PS00824">
    <property type="entry name" value="EF1BD_1"/>
    <property type="match status" value="1"/>
</dbReference>
<dbReference type="PROSITE" id="PS00825">
    <property type="entry name" value="EF1BD_2"/>
    <property type="match status" value="1"/>
</dbReference>
<gene>
    <name type="primary">EFB1</name>
    <name type="synonym">TEF5</name>
    <name type="ordered locus">YAL003W</name>
</gene>
<feature type="initiator methionine" description="Removed" evidence="5">
    <location>
        <position position="1"/>
    </location>
</feature>
<feature type="chain" id="PRO_0000155042" description="Elongation factor 1-beta">
    <location>
        <begin position="2"/>
        <end position="206"/>
    </location>
</feature>
<feature type="modified residue" description="N-acetylalanine" evidence="5">
    <location>
        <position position="2"/>
    </location>
</feature>
<feature type="modified residue" description="Phosphoserine" evidence="8">
    <location>
        <position position="31"/>
    </location>
</feature>
<feature type="modified residue" description="Phosphoserine" evidence="7 8 9">
    <location>
        <position position="86"/>
    </location>
</feature>
<feature type="cross-link" description="Glycyl lysine isopeptide (Lys-Gly) (interchain with G-Cter in ubiquitin)" evidence="10">
    <location>
        <position position="13"/>
    </location>
</feature>
<feature type="mutagenesis site" description="In TEF5-7; reduces translation efficiency and enhances translation fidelity.">
    <original>KSI</original>
    <variation>R</variation>
    <location>
        <begin position="120"/>
        <end position="122"/>
    </location>
</feature>
<feature type="mutagenesis site" description="Reduces translation efficiency and enhances translation fidelity." evidence="1">
    <original>S</original>
    <variation>I</variation>
    <variation>L</variation>
    <variation>N</variation>
    <location>
        <position position="121"/>
    </location>
</feature>
<feature type="mutagenesis site" description="Temperature-sensitive." evidence="2">
    <original>F</original>
    <variation>A</variation>
    <location>
        <position position="163"/>
    </location>
</feature>
<feature type="mutagenesis site" description="Loss of catalytic activity, but still binds to eEF1A." evidence="3">
    <original>K</original>
    <variation>A</variation>
    <location>
        <position position="205"/>
    </location>
</feature>
<feature type="sequence conflict" description="In Ref. 1; BAA03165." evidence="6" ref="1">
    <original>S</original>
    <variation>F</variation>
    <location>
        <position position="49"/>
    </location>
</feature>
<feature type="sequence conflict" description="In Ref. 1; BAA03165." evidence="6" ref="1">
    <original>S</original>
    <variation>F</variation>
    <location>
        <position position="57"/>
    </location>
</feature>
<feature type="sequence conflict" description="In Ref. 1; BAA03165." evidence="6" ref="1">
    <original>L</original>
    <variation>W</variation>
    <location>
        <position position="98"/>
    </location>
</feature>
<feature type="sequence conflict" description="In Ref. 6; AA sequence." evidence="6" ref="6">
    <original>L</original>
    <variation>E</variation>
    <location>
        <position position="168"/>
    </location>
</feature>
<feature type="strand" evidence="11">
    <location>
        <begin position="120"/>
        <end position="131"/>
    </location>
</feature>
<feature type="helix" evidence="11">
    <location>
        <begin position="136"/>
        <end position="144"/>
    </location>
</feature>
<feature type="strand" evidence="11">
    <location>
        <begin position="151"/>
        <end position="162"/>
    </location>
</feature>
<feature type="strand" evidence="11">
    <location>
        <begin position="165"/>
        <end position="175"/>
    </location>
</feature>
<feature type="turn" evidence="11">
    <location>
        <begin position="176"/>
        <end position="178"/>
    </location>
</feature>
<feature type="helix" evidence="11">
    <location>
        <begin position="181"/>
        <end position="189"/>
    </location>
</feature>
<feature type="turn" evidence="11">
    <location>
        <begin position="192"/>
        <end position="194"/>
    </location>
</feature>
<feature type="strand" evidence="11">
    <location>
        <begin position="195"/>
        <end position="205"/>
    </location>
</feature>
<reference key="1">
    <citation type="journal article" date="1993" name="FEBS Lett.">
        <title>Cloning and characterization of the elongation factor EF-1 beta homologue of Saccharomyces cerevisiae. EF-1 beta is essential for growth.</title>
        <authorList>
            <person name="Hiraga K."/>
            <person name="Suzuki K."/>
            <person name="Tsuchiya E."/>
            <person name="Miyakawa T."/>
        </authorList>
    </citation>
    <scope>NUCLEOTIDE SEQUENCE [GENOMIC DNA]</scope>
</reference>
<reference key="2">
    <citation type="journal article" date="1994" name="Yeast">
        <title>Sequencing of chromosome I of Saccharomyces cerevisiae: analysis of the 42 kbp SPO7-CENI-CDC15 region.</title>
        <authorList>
            <person name="Clark M.W."/>
            <person name="Keng T."/>
            <person name="Storms R.K."/>
            <person name="Zhong W.-W."/>
            <person name="Fortin N."/>
            <person name="Zeng B."/>
            <person name="Delaney S."/>
            <person name="Ouellette B.F.F."/>
            <person name="Barton A.B."/>
            <person name="Kaback D.B."/>
            <person name="Bussey H."/>
        </authorList>
    </citation>
    <scope>NUCLEOTIDE SEQUENCE [GENOMIC DNA]</scope>
    <source>
        <strain>ATCC 204511 / S288c / AB972</strain>
    </source>
</reference>
<reference key="3">
    <citation type="journal article" date="1995" name="Proc. Natl. Acad. Sci. U.S.A.">
        <title>The nucleotide sequence of chromosome I from Saccharomyces cerevisiae.</title>
        <authorList>
            <person name="Bussey H."/>
            <person name="Kaback D.B."/>
            <person name="Zhong W.-W."/>
            <person name="Vo D.H."/>
            <person name="Clark M.W."/>
            <person name="Fortin N."/>
            <person name="Hall J."/>
            <person name="Ouellette B.F.F."/>
            <person name="Keng T."/>
            <person name="Barton A.B."/>
            <person name="Su Y."/>
            <person name="Davies C.J."/>
            <person name="Storms R.K."/>
        </authorList>
    </citation>
    <scope>NUCLEOTIDE SEQUENCE [LARGE SCALE GENOMIC DNA]</scope>
    <source>
        <strain>ATCC 204508 / S288c</strain>
    </source>
</reference>
<reference key="4">
    <citation type="journal article" date="2014" name="G3 (Bethesda)">
        <title>The reference genome sequence of Saccharomyces cerevisiae: Then and now.</title>
        <authorList>
            <person name="Engel S.R."/>
            <person name="Dietrich F.S."/>
            <person name="Fisk D.G."/>
            <person name="Binkley G."/>
            <person name="Balakrishnan R."/>
            <person name="Costanzo M.C."/>
            <person name="Dwight S.S."/>
            <person name="Hitz B.C."/>
            <person name="Karra K."/>
            <person name="Nash R.S."/>
            <person name="Weng S."/>
            <person name="Wong E.D."/>
            <person name="Lloyd P."/>
            <person name="Skrzypek M.S."/>
            <person name="Miyasato S.R."/>
            <person name="Simison M."/>
            <person name="Cherry J.M."/>
        </authorList>
    </citation>
    <scope>GENOME REANNOTATION</scope>
    <source>
        <strain>ATCC 204508 / S288c</strain>
    </source>
</reference>
<reference key="5">
    <citation type="journal article" date="1996" name="FEMS Microbiol. Lett.">
        <title>Protein expression during exponential growth in 0.7 M NaCl medium of Saccharomyces cerevisiae.</title>
        <authorList>
            <person name="Norbeck J."/>
            <person name="Blomberg A."/>
        </authorList>
    </citation>
    <scope>PROTEIN SEQUENCE OF 14-22 AND 51-56</scope>
    <source>
        <strain>ATCC 38531 / Y41</strain>
    </source>
</reference>
<reference key="6">
    <citation type="journal article" date="1994" name="Electrophoresis">
        <title>Protein identifications for a Saccharomyces cerevisiae protein database.</title>
        <authorList>
            <person name="Garrels J.I."/>
            <person name="Futcher B."/>
            <person name="Kobayashi R."/>
            <person name="Latter G.I."/>
            <person name="Schwender B."/>
            <person name="Volpe T."/>
            <person name="Warner J.R."/>
            <person name="McLaughlin C.S."/>
        </authorList>
    </citation>
    <scope>PROTEIN SEQUENCE OF 168-178</scope>
    <source>
        <strain>ATCC 204508 / S288c</strain>
    </source>
</reference>
<reference key="7">
    <citation type="journal article" date="1997" name="Electrophoresis">
        <title>Proteome studies of Saccharomyces cerevisiae: identification and characterization of abundant proteins.</title>
        <authorList>
            <person name="Garrels J.I."/>
            <person name="McLaughlin C.S."/>
            <person name="Warner J.R."/>
            <person name="Futcher B."/>
            <person name="Latter G.I."/>
            <person name="Kobayashi R."/>
            <person name="Schwender B."/>
            <person name="Volpe T."/>
            <person name="Anderson D.S."/>
            <person name="Mesquita-Fuentes R."/>
            <person name="Payne W.E."/>
        </authorList>
    </citation>
    <scope>ACETYLATION AT ALA-2</scope>
</reference>
<reference key="8">
    <citation type="journal article" date="1999" name="Mol. Cell. Biol.">
        <title>Mutations in elongation factor 1beta, a guanine nucleotide exchange factor, enhance translational fidelity.</title>
        <authorList>
            <person name="Carr-Schmid A."/>
            <person name="Valente L."/>
            <person name="Loik V.I."/>
            <person name="Williams T."/>
            <person name="Starita L.M."/>
            <person name="Kinzy T.G."/>
        </authorList>
    </citation>
    <scope>FUNCTION</scope>
    <scope>MUTAGENESIS OF SER-121</scope>
</reference>
<reference key="9">
    <citation type="journal article" date="1999" name="Mol. Cell. Biol.">
        <title>A sampling of the yeast proteome.</title>
        <authorList>
            <person name="Futcher B."/>
            <person name="Latter G.I."/>
            <person name="Monardo P."/>
            <person name="McLaughlin C.S."/>
            <person name="Garrels J.I."/>
        </authorList>
    </citation>
    <scope>PHOSPHORYLATION</scope>
</reference>
<reference key="10">
    <citation type="journal article" date="2003" name="Biochem. J.">
        <title>Protein S-thiolation targets glycolysis and protein synthesis in response to oxidative stress in the yeast Saccharomyces cerevisiae.</title>
        <authorList>
            <person name="Shenton D."/>
            <person name="Grant C.M."/>
        </authorList>
    </citation>
    <scope>S-THIOLATION</scope>
</reference>
<reference key="11">
    <citation type="journal article" date="2005" name="Mol. Cell. Proteomics">
        <title>Quantitative phosphoproteomics applied to the yeast pheromone signaling pathway.</title>
        <authorList>
            <person name="Gruhler A."/>
            <person name="Olsen J.V."/>
            <person name="Mohammed S."/>
            <person name="Mortensen P."/>
            <person name="Faergeman N.J."/>
            <person name="Mann M."/>
            <person name="Jensen O.N."/>
        </authorList>
    </citation>
    <scope>IDENTIFICATION BY MASS SPECTROMETRY [LARGE SCALE ANALYSIS]</scope>
    <source>
        <strain>YAL6B</strain>
    </source>
</reference>
<reference key="12">
    <citation type="journal article" date="2007" name="J. Proteome Res.">
        <title>Large-scale phosphorylation analysis of alpha-factor-arrested Saccharomyces cerevisiae.</title>
        <authorList>
            <person name="Li X."/>
            <person name="Gerber S.A."/>
            <person name="Rudner A.D."/>
            <person name="Beausoleil S.A."/>
            <person name="Haas W."/>
            <person name="Villen J."/>
            <person name="Elias J.E."/>
            <person name="Gygi S.P."/>
        </authorList>
    </citation>
    <scope>PHOSPHORYLATION [LARGE SCALE ANALYSIS] AT SER-86</scope>
    <scope>IDENTIFICATION BY MASS SPECTROMETRY [LARGE SCALE ANALYSIS]</scope>
    <source>
        <strain>ADR376</strain>
    </source>
</reference>
<reference key="13">
    <citation type="journal article" date="2008" name="Mol. Cell. Proteomics">
        <title>A multidimensional chromatography technology for in-depth phosphoproteome analysis.</title>
        <authorList>
            <person name="Albuquerque C.P."/>
            <person name="Smolka M.B."/>
            <person name="Payne S.H."/>
            <person name="Bafna V."/>
            <person name="Eng J."/>
            <person name="Zhou H."/>
        </authorList>
    </citation>
    <scope>PHOSPHORYLATION [LARGE SCALE ANALYSIS] AT SER-31 AND SER-86</scope>
    <scope>IDENTIFICATION BY MASS SPECTROMETRY [LARGE SCALE ANALYSIS]</scope>
</reference>
<reference key="14">
    <citation type="journal article" date="2009" name="Science">
        <title>Global analysis of Cdk1 substrate phosphorylation sites provides insights into evolution.</title>
        <authorList>
            <person name="Holt L.J."/>
            <person name="Tuch B.B."/>
            <person name="Villen J."/>
            <person name="Johnson A.D."/>
            <person name="Gygi S.P."/>
            <person name="Morgan D.O."/>
        </authorList>
    </citation>
    <scope>PHOSPHORYLATION [LARGE SCALE ANALYSIS] AT SER-86</scope>
    <scope>IDENTIFICATION BY MASS SPECTROMETRY [LARGE SCALE ANALYSIS]</scope>
</reference>
<reference key="15">
    <citation type="journal article" date="2012" name="Proteomics">
        <title>Sites of ubiquitin attachment in Saccharomyces cerevisiae.</title>
        <authorList>
            <person name="Starita L.M."/>
            <person name="Lo R.S."/>
            <person name="Eng J.K."/>
            <person name="von Haller P.D."/>
            <person name="Fields S."/>
        </authorList>
    </citation>
    <scope>UBIQUITINATION [LARGE SCALE ANALYSIS] AT LYS-13</scope>
    <scope>IDENTIFICATION BY MASS SPECTROMETRY [LARGE SCALE ANALYSIS]</scope>
</reference>
<reference key="16">
    <citation type="journal article" date="2000" name="Mol. Cell">
        <title>Structural basis for nucleotide exchange and competition with tRNA in the yeast elongation factor complex eEF1A:eEF1Balpha.</title>
        <authorList>
            <person name="Andersen G.R."/>
            <person name="Pedersen L."/>
            <person name="Valente L."/>
            <person name="Chatterjee I."/>
            <person name="Kinzy T.G."/>
            <person name="Kjeldgaard M."/>
            <person name="Nyborg J."/>
        </authorList>
    </citation>
    <scope>X-RAY CRYSTALLOGRAPHY (1.67 ANGSTROMS) OF 113-206 IN COMPLEX WITH EEF1A</scope>
    <scope>MUTAGENESIS OF PHE-163</scope>
</reference>
<reference key="17">
    <citation type="journal article" date="2001" name="Nat. Struct. Biol.">
        <title>Crystal structures of nucleotide exchange intermediates in the eEF1A-eEF1Balpha complex.</title>
        <authorList>
            <person name="Andersen G.R."/>
            <person name="Valente L."/>
            <person name="Pedersen L."/>
            <person name="Kinzy T.G."/>
            <person name="Nyborg J."/>
        </authorList>
    </citation>
    <scope>X-RAY CRYSTALLOGRAPHY (2.05 ANGSTROMS) OF 113-206 IN COMPLEX WITH EEF1A</scope>
    <scope>MUTAGENESIS OF LYS-205</scope>
</reference>
<protein>
    <recommendedName>
        <fullName>Elongation factor 1-beta</fullName>
        <shortName>EF-1-beta</shortName>
    </recommendedName>
    <alternativeName>
        <fullName>Eukaryotic elongation factor 1Balpha</fullName>
        <shortName>eEF1Balpha</shortName>
    </alternativeName>
    <alternativeName>
        <fullName>Translation elongation factor 1B alpha</fullName>
    </alternativeName>
</protein>